<organism>
    <name type="scientific">Homo sapiens</name>
    <name type="common">Human</name>
    <dbReference type="NCBI Taxonomy" id="9606"/>
    <lineage>
        <taxon>Eukaryota</taxon>
        <taxon>Metazoa</taxon>
        <taxon>Chordata</taxon>
        <taxon>Craniata</taxon>
        <taxon>Vertebrata</taxon>
        <taxon>Euteleostomi</taxon>
        <taxon>Mammalia</taxon>
        <taxon>Eutheria</taxon>
        <taxon>Euarchontoglires</taxon>
        <taxon>Primates</taxon>
        <taxon>Haplorrhini</taxon>
        <taxon>Catarrhini</taxon>
        <taxon>Hominidae</taxon>
        <taxon>Homo</taxon>
    </lineage>
</organism>
<comment type="function">
    <text evidence="2">Functions as a regulator of the BMP signaling pathway and may be involved in epidermal differentiation.</text>
</comment>
<comment type="interaction">
    <interactant intactId="EBI-27012657">
        <id>A8MWY0</id>
    </interactant>
    <interactant intactId="EBI-21494833">
        <id>Q86TY3</id>
        <label>ARMH4</label>
    </interactant>
    <organismsDiffer>false</organismsDiffer>
    <experiments>2</experiments>
</comment>
<comment type="subcellular location">
    <subcellularLocation>
        <location evidence="3">Cell membrane</location>
        <topology evidence="4">Single-pass type I membrane protein</topology>
    </subcellularLocation>
</comment>
<comment type="alternative products">
    <event type="alternative splicing"/>
    <isoform>
        <id>A8MWY0-1</id>
        <name>1</name>
        <sequence type="displayed"/>
    </isoform>
    <isoform>
        <id>A8MWY0-2</id>
        <name>2</name>
        <sequence type="described" ref="VSP_033529 VSP_033530"/>
    </isoform>
    <isoform>
        <id>A8MWY0-3</id>
        <name>3</name>
        <sequence type="described" ref="VSP_043254 VSP_043255"/>
    </isoform>
</comment>
<comment type="similarity">
    <text evidence="8">Belongs to the ELAPOR family.</text>
</comment>
<comment type="sequence caution" evidence="8">
    <conflict type="erroneous initiation">
        <sequence resource="EMBL-CDS" id="AAI17310"/>
    </conflict>
</comment>
<comment type="sequence caution" evidence="8">
    <conflict type="frameshift">
        <sequence resource="EMBL-CDS" id="BAB71041"/>
    </conflict>
</comment>
<dbReference type="EMBL" id="AK055902">
    <property type="protein sequence ID" value="BAB71041.1"/>
    <property type="status" value="ALT_FRAME"/>
    <property type="molecule type" value="mRNA"/>
</dbReference>
<dbReference type="EMBL" id="AK296250">
    <property type="protein sequence ID" value="BAG58965.1"/>
    <property type="molecule type" value="mRNA"/>
</dbReference>
<dbReference type="EMBL" id="AC000122">
    <property type="status" value="NOT_ANNOTATED_CDS"/>
    <property type="molecule type" value="Genomic_DNA"/>
</dbReference>
<dbReference type="EMBL" id="AC002081">
    <property type="status" value="NOT_ANNOTATED_CDS"/>
    <property type="molecule type" value="Genomic_DNA"/>
</dbReference>
<dbReference type="EMBL" id="AC004519">
    <property type="status" value="NOT_ANNOTATED_CDS"/>
    <property type="molecule type" value="Genomic_DNA"/>
</dbReference>
<dbReference type="EMBL" id="CH236949">
    <property type="protein sequence ID" value="EAL24181.1"/>
    <property type="molecule type" value="Genomic_DNA"/>
</dbReference>
<dbReference type="EMBL" id="CH471091">
    <property type="protein sequence ID" value="EAW76969.1"/>
    <property type="molecule type" value="Genomic_DNA"/>
</dbReference>
<dbReference type="EMBL" id="BC117309">
    <property type="protein sequence ID" value="AAI17310.1"/>
    <property type="status" value="ALT_INIT"/>
    <property type="molecule type" value="mRNA"/>
</dbReference>
<dbReference type="CCDS" id="CCDS34677.2">
    <molecule id="A8MWY0-3"/>
</dbReference>
<dbReference type="CCDS" id="CCDS47632.1">
    <molecule id="A8MWY0-1"/>
</dbReference>
<dbReference type="RefSeq" id="NP_001136221.1">
    <molecule id="A8MWY0-1"/>
    <property type="nucleotide sequence ID" value="NM_001142749.3"/>
</dbReference>
<dbReference type="RefSeq" id="NP_001278920.1">
    <molecule id="A8MWY0-2"/>
    <property type="nucleotide sequence ID" value="NM_001291991.2"/>
</dbReference>
<dbReference type="RefSeq" id="NP_689961.3">
    <molecule id="A8MWY0-3"/>
    <property type="nucleotide sequence ID" value="NM_152748.3"/>
</dbReference>
<dbReference type="RefSeq" id="XP_016867333.1">
    <property type="nucleotide sequence ID" value="XM_017011844.1"/>
</dbReference>
<dbReference type="BioGRID" id="128789">
    <property type="interactions" value="8"/>
</dbReference>
<dbReference type="FunCoup" id="A8MWY0">
    <property type="interactions" value="881"/>
</dbReference>
<dbReference type="IntAct" id="A8MWY0">
    <property type="interactions" value="5"/>
</dbReference>
<dbReference type="STRING" id="9606.ENSP00000413445"/>
<dbReference type="GlyCosmos" id="A8MWY0">
    <property type="glycosylation" value="3 sites, No reported glycans"/>
</dbReference>
<dbReference type="GlyGen" id="A8MWY0">
    <property type="glycosylation" value="6 sites, 3 N-linked glycans (3 sites)"/>
</dbReference>
<dbReference type="iPTMnet" id="A8MWY0"/>
<dbReference type="PhosphoSitePlus" id="A8MWY0"/>
<dbReference type="BioMuta" id="KIAA1324L"/>
<dbReference type="jPOST" id="A8MWY0"/>
<dbReference type="MassIVE" id="A8MWY0"/>
<dbReference type="PaxDb" id="9606-ENSP00000413445"/>
<dbReference type="PeptideAtlas" id="A8MWY0"/>
<dbReference type="ProteomicsDB" id="2277">
    <molecule id="A8MWY0-1"/>
</dbReference>
<dbReference type="ProteomicsDB" id="2278">
    <molecule id="A8MWY0-2"/>
</dbReference>
<dbReference type="ProteomicsDB" id="2279">
    <molecule id="A8MWY0-3"/>
</dbReference>
<dbReference type="Antibodypedia" id="48884">
    <property type="antibodies" value="101 antibodies from 17 providers"/>
</dbReference>
<dbReference type="DNASU" id="222223"/>
<dbReference type="Ensembl" id="ENST00000416314.5">
    <molecule id="A8MWY0-3"/>
    <property type="protein sequence ID" value="ENSP00000402390.1"/>
    <property type="gene ID" value="ENSG00000164659.15"/>
</dbReference>
<dbReference type="Ensembl" id="ENST00000450689.7">
    <molecule id="A8MWY0-1"/>
    <property type="protein sequence ID" value="ENSP00000413445.2"/>
    <property type="gene ID" value="ENSG00000164659.15"/>
</dbReference>
<dbReference type="GeneID" id="222223"/>
<dbReference type="KEGG" id="hsa:222223"/>
<dbReference type="MANE-Select" id="ENST00000450689.7">
    <property type="protein sequence ID" value="ENSP00000413445.2"/>
    <property type="RefSeq nucleotide sequence ID" value="NM_001142749.3"/>
    <property type="RefSeq protein sequence ID" value="NP_001136221.1"/>
</dbReference>
<dbReference type="UCSC" id="uc003uie.5">
    <molecule id="A8MWY0-1"/>
    <property type="organism name" value="human"/>
</dbReference>
<dbReference type="AGR" id="HGNC:21945"/>
<dbReference type="CTD" id="222223"/>
<dbReference type="DisGeNET" id="222223"/>
<dbReference type="GeneCards" id="ELAPOR2"/>
<dbReference type="HGNC" id="HGNC:21945">
    <property type="gene designation" value="ELAPOR2"/>
</dbReference>
<dbReference type="HPA" id="ENSG00000164659">
    <property type="expression patterns" value="Tissue enhanced (lung)"/>
</dbReference>
<dbReference type="MIM" id="614048">
    <property type="type" value="gene"/>
</dbReference>
<dbReference type="neXtProt" id="NX_A8MWY0"/>
<dbReference type="OpenTargets" id="ENSG00000164659"/>
<dbReference type="PharmGKB" id="PA142671608"/>
<dbReference type="VEuPathDB" id="HostDB:ENSG00000164659"/>
<dbReference type="eggNOG" id="KOG1217">
    <property type="taxonomic scope" value="Eukaryota"/>
</dbReference>
<dbReference type="GeneTree" id="ENSGT00940000154983"/>
<dbReference type="HOGENOM" id="CLU_005066_0_0_1"/>
<dbReference type="InParanoid" id="A8MWY0"/>
<dbReference type="OMA" id="CEYISED"/>
<dbReference type="OrthoDB" id="439917at2759"/>
<dbReference type="PAN-GO" id="A8MWY0">
    <property type="GO annotations" value="2 GO annotations based on evolutionary models"/>
</dbReference>
<dbReference type="PhylomeDB" id="A8MWY0"/>
<dbReference type="TreeFam" id="TF315906"/>
<dbReference type="PathwayCommons" id="A8MWY0"/>
<dbReference type="SignaLink" id="A8MWY0"/>
<dbReference type="BioGRID-ORCS" id="222223">
    <property type="hits" value="8 hits in 1153 CRISPR screens"/>
</dbReference>
<dbReference type="ChiTaRS" id="KIAA1324L">
    <property type="organism name" value="human"/>
</dbReference>
<dbReference type="GenomeRNAi" id="222223"/>
<dbReference type="Pharos" id="A8MWY0">
    <property type="development level" value="Tdark"/>
</dbReference>
<dbReference type="PRO" id="PR:A8MWY0"/>
<dbReference type="Proteomes" id="UP000005640">
    <property type="component" value="Chromosome 7"/>
</dbReference>
<dbReference type="RNAct" id="A8MWY0">
    <property type="molecule type" value="protein"/>
</dbReference>
<dbReference type="Bgee" id="ENSG00000164659">
    <property type="expression patterns" value="Expressed in corpus callosum and 175 other cell types or tissues"/>
</dbReference>
<dbReference type="ExpressionAtlas" id="A8MWY0">
    <property type="expression patterns" value="baseline and differential"/>
</dbReference>
<dbReference type="GO" id="GO:0016020">
    <property type="term" value="C:membrane"/>
    <property type="evidence" value="ECO:0000318"/>
    <property type="project" value="GO_Central"/>
</dbReference>
<dbReference type="GO" id="GO:0005886">
    <property type="term" value="C:plasma membrane"/>
    <property type="evidence" value="ECO:0000250"/>
    <property type="project" value="UniProtKB"/>
</dbReference>
<dbReference type="GO" id="GO:0070700">
    <property type="term" value="F:BMP receptor binding"/>
    <property type="evidence" value="ECO:0000250"/>
    <property type="project" value="UniProtKB"/>
</dbReference>
<dbReference type="GO" id="GO:0051961">
    <property type="term" value="P:negative regulation of nervous system development"/>
    <property type="evidence" value="ECO:0000250"/>
    <property type="project" value="UniProtKB"/>
</dbReference>
<dbReference type="GO" id="GO:0030513">
    <property type="term" value="P:positive regulation of BMP signaling pathway"/>
    <property type="evidence" value="ECO:0000250"/>
    <property type="project" value="UniProtKB"/>
</dbReference>
<dbReference type="GO" id="GO:0045684">
    <property type="term" value="P:positive regulation of epidermis development"/>
    <property type="evidence" value="ECO:0000250"/>
    <property type="project" value="UniProtKB"/>
</dbReference>
<dbReference type="Gene3D" id="2.70.130.10">
    <property type="entry name" value="Mannose-6-phosphate receptor binding domain"/>
    <property type="match status" value="1"/>
</dbReference>
<dbReference type="Gene3D" id="2.10.50.10">
    <property type="entry name" value="Tumor Necrosis Factor Receptor, subunit A, domain 2"/>
    <property type="match status" value="3"/>
</dbReference>
<dbReference type="InterPro" id="IPR056609">
    <property type="entry name" value="Elapor1-like_3rd"/>
</dbReference>
<dbReference type="InterPro" id="IPR039181">
    <property type="entry name" value="Elapor1/2"/>
</dbReference>
<dbReference type="InterPro" id="IPR056606">
    <property type="entry name" value="Elapor1/2_C"/>
</dbReference>
<dbReference type="InterPro" id="IPR056608">
    <property type="entry name" value="Elapor1/2_GBD"/>
</dbReference>
<dbReference type="InterPro" id="IPR056607">
    <property type="entry name" value="Elapor1/2_MRH"/>
</dbReference>
<dbReference type="InterPro" id="IPR056610">
    <property type="entry name" value="Elapor1/2_TNFR-like"/>
</dbReference>
<dbReference type="InterPro" id="IPR009030">
    <property type="entry name" value="Growth_fac_rcpt_cys_sf"/>
</dbReference>
<dbReference type="InterPro" id="IPR009011">
    <property type="entry name" value="Man6P_isomerase_rcpt-bd_dom_sf"/>
</dbReference>
<dbReference type="InterPro" id="IPR044865">
    <property type="entry name" value="MRH_dom"/>
</dbReference>
<dbReference type="PANTHER" id="PTHR22727:SF3">
    <property type="entry name" value="ENDOSOME_LYSOSOME-ASSOCIATED APOPTOSIS AND AUTOPHAGY REGULATOR FAMILY MEMBER 2"/>
    <property type="match status" value="1"/>
</dbReference>
<dbReference type="PANTHER" id="PTHR22727">
    <property type="entry name" value="PROTEIN CBG13728"/>
    <property type="match status" value="1"/>
</dbReference>
<dbReference type="Pfam" id="PF23089">
    <property type="entry name" value="ELAPOR1_C"/>
    <property type="match status" value="1"/>
</dbReference>
<dbReference type="Pfam" id="PF23031">
    <property type="entry name" value="GBD_ELAPOR1"/>
    <property type="match status" value="1"/>
</dbReference>
<dbReference type="Pfam" id="PF23032">
    <property type="entry name" value="GBD_ELAPOR1-like_3rd"/>
    <property type="match status" value="1"/>
</dbReference>
<dbReference type="Pfam" id="PF23087">
    <property type="entry name" value="MRH_ELAPOR1_9th"/>
    <property type="match status" value="1"/>
</dbReference>
<dbReference type="Pfam" id="PF23091">
    <property type="entry name" value="TNFR_ELAPOR1_6th"/>
    <property type="match status" value="1"/>
</dbReference>
<dbReference type="SMART" id="SM01411">
    <property type="entry name" value="Ephrin_rec_like"/>
    <property type="match status" value="4"/>
</dbReference>
<dbReference type="SUPFAM" id="SSF57184">
    <property type="entry name" value="Growth factor receptor domain"/>
    <property type="match status" value="2"/>
</dbReference>
<dbReference type="SUPFAM" id="SSF50911">
    <property type="entry name" value="Mannose 6-phosphate receptor domain"/>
    <property type="match status" value="1"/>
</dbReference>
<dbReference type="PROSITE" id="PS51914">
    <property type="entry name" value="MRH"/>
    <property type="match status" value="1"/>
</dbReference>
<name>ELAP2_HUMAN</name>
<protein>
    <recommendedName>
        <fullName evidence="8">Endosome/lysosome-associated apoptosis and autophagy regulator family member 2</fullName>
    </recommendedName>
    <alternativeName>
        <fullName evidence="7">Estrogen-induced gene 121-like protein</fullName>
        <shortName evidence="7">hEIG121L</shortName>
    </alternativeName>
</protein>
<reference key="1">
    <citation type="journal article" date="2004" name="Nat. Genet.">
        <title>Complete sequencing and characterization of 21,243 full-length human cDNAs.</title>
        <authorList>
            <person name="Ota T."/>
            <person name="Suzuki Y."/>
            <person name="Nishikawa T."/>
            <person name="Otsuki T."/>
            <person name="Sugiyama T."/>
            <person name="Irie R."/>
            <person name="Wakamatsu A."/>
            <person name="Hayashi K."/>
            <person name="Sato H."/>
            <person name="Nagai K."/>
            <person name="Kimura K."/>
            <person name="Makita H."/>
            <person name="Sekine M."/>
            <person name="Obayashi M."/>
            <person name="Nishi T."/>
            <person name="Shibahara T."/>
            <person name="Tanaka T."/>
            <person name="Ishii S."/>
            <person name="Yamamoto J."/>
            <person name="Saito K."/>
            <person name="Kawai Y."/>
            <person name="Isono Y."/>
            <person name="Nakamura Y."/>
            <person name="Nagahari K."/>
            <person name="Murakami K."/>
            <person name="Yasuda T."/>
            <person name="Iwayanagi T."/>
            <person name="Wagatsuma M."/>
            <person name="Shiratori A."/>
            <person name="Sudo H."/>
            <person name="Hosoiri T."/>
            <person name="Kaku Y."/>
            <person name="Kodaira H."/>
            <person name="Kondo H."/>
            <person name="Sugawara M."/>
            <person name="Takahashi M."/>
            <person name="Kanda K."/>
            <person name="Yokoi T."/>
            <person name="Furuya T."/>
            <person name="Kikkawa E."/>
            <person name="Omura Y."/>
            <person name="Abe K."/>
            <person name="Kamihara K."/>
            <person name="Katsuta N."/>
            <person name="Sato K."/>
            <person name="Tanikawa M."/>
            <person name="Yamazaki M."/>
            <person name="Ninomiya K."/>
            <person name="Ishibashi T."/>
            <person name="Yamashita H."/>
            <person name="Murakawa K."/>
            <person name="Fujimori K."/>
            <person name="Tanai H."/>
            <person name="Kimata M."/>
            <person name="Watanabe M."/>
            <person name="Hiraoka S."/>
            <person name="Chiba Y."/>
            <person name="Ishida S."/>
            <person name="Ono Y."/>
            <person name="Takiguchi S."/>
            <person name="Watanabe S."/>
            <person name="Yosida M."/>
            <person name="Hotuta T."/>
            <person name="Kusano J."/>
            <person name="Kanehori K."/>
            <person name="Takahashi-Fujii A."/>
            <person name="Hara H."/>
            <person name="Tanase T.-O."/>
            <person name="Nomura Y."/>
            <person name="Togiya S."/>
            <person name="Komai F."/>
            <person name="Hara R."/>
            <person name="Takeuchi K."/>
            <person name="Arita M."/>
            <person name="Imose N."/>
            <person name="Musashino K."/>
            <person name="Yuuki H."/>
            <person name="Oshima A."/>
            <person name="Sasaki N."/>
            <person name="Aotsuka S."/>
            <person name="Yoshikawa Y."/>
            <person name="Matsunawa H."/>
            <person name="Ichihara T."/>
            <person name="Shiohata N."/>
            <person name="Sano S."/>
            <person name="Moriya S."/>
            <person name="Momiyama H."/>
            <person name="Satoh N."/>
            <person name="Takami S."/>
            <person name="Terashima Y."/>
            <person name="Suzuki O."/>
            <person name="Nakagawa S."/>
            <person name="Senoh A."/>
            <person name="Mizoguchi H."/>
            <person name="Goto Y."/>
            <person name="Shimizu F."/>
            <person name="Wakebe H."/>
            <person name="Hishigaki H."/>
            <person name="Watanabe T."/>
            <person name="Sugiyama A."/>
            <person name="Takemoto M."/>
            <person name="Kawakami B."/>
            <person name="Yamazaki M."/>
            <person name="Watanabe K."/>
            <person name="Kumagai A."/>
            <person name="Itakura S."/>
            <person name="Fukuzumi Y."/>
            <person name="Fujimori Y."/>
            <person name="Komiyama M."/>
            <person name="Tashiro H."/>
            <person name="Tanigami A."/>
            <person name="Fujiwara T."/>
            <person name="Ono T."/>
            <person name="Yamada K."/>
            <person name="Fujii Y."/>
            <person name="Ozaki K."/>
            <person name="Hirao M."/>
            <person name="Ohmori Y."/>
            <person name="Kawabata A."/>
            <person name="Hikiji T."/>
            <person name="Kobatake N."/>
            <person name="Inagaki H."/>
            <person name="Ikema Y."/>
            <person name="Okamoto S."/>
            <person name="Okitani R."/>
            <person name="Kawakami T."/>
            <person name="Noguchi S."/>
            <person name="Itoh T."/>
            <person name="Shigeta K."/>
            <person name="Senba T."/>
            <person name="Matsumura K."/>
            <person name="Nakajima Y."/>
            <person name="Mizuno T."/>
            <person name="Morinaga M."/>
            <person name="Sasaki M."/>
            <person name="Togashi T."/>
            <person name="Oyama M."/>
            <person name="Hata H."/>
            <person name="Watanabe M."/>
            <person name="Komatsu T."/>
            <person name="Mizushima-Sugano J."/>
            <person name="Satoh T."/>
            <person name="Shirai Y."/>
            <person name="Takahashi Y."/>
            <person name="Nakagawa K."/>
            <person name="Okumura K."/>
            <person name="Nagase T."/>
            <person name="Nomura N."/>
            <person name="Kikuchi H."/>
            <person name="Masuho Y."/>
            <person name="Yamashita R."/>
            <person name="Nakai K."/>
            <person name="Yada T."/>
            <person name="Nakamura Y."/>
            <person name="Ohara O."/>
            <person name="Isogai T."/>
            <person name="Sugano S."/>
        </authorList>
    </citation>
    <scope>NUCLEOTIDE SEQUENCE [LARGE SCALE MRNA] (ISOFORMS 2 AND 3)</scope>
    <source>
        <tissue>Mesangial cell</tissue>
        <tissue>Thalamus</tissue>
    </source>
</reference>
<reference key="2">
    <citation type="journal article" date="2003" name="Nature">
        <title>The DNA sequence of human chromosome 7.</title>
        <authorList>
            <person name="Hillier L.W."/>
            <person name="Fulton R.S."/>
            <person name="Fulton L.A."/>
            <person name="Graves T.A."/>
            <person name="Pepin K.H."/>
            <person name="Wagner-McPherson C."/>
            <person name="Layman D."/>
            <person name="Maas J."/>
            <person name="Jaeger S."/>
            <person name="Walker R."/>
            <person name="Wylie K."/>
            <person name="Sekhon M."/>
            <person name="Becker M.C."/>
            <person name="O'Laughlin M.D."/>
            <person name="Schaller M.E."/>
            <person name="Fewell G.A."/>
            <person name="Delehaunty K.D."/>
            <person name="Miner T.L."/>
            <person name="Nash W.E."/>
            <person name="Cordes M."/>
            <person name="Du H."/>
            <person name="Sun H."/>
            <person name="Edwards J."/>
            <person name="Bradshaw-Cordum H."/>
            <person name="Ali J."/>
            <person name="Andrews S."/>
            <person name="Isak A."/>
            <person name="Vanbrunt A."/>
            <person name="Nguyen C."/>
            <person name="Du F."/>
            <person name="Lamar B."/>
            <person name="Courtney L."/>
            <person name="Kalicki J."/>
            <person name="Ozersky P."/>
            <person name="Bielicki L."/>
            <person name="Scott K."/>
            <person name="Holmes A."/>
            <person name="Harkins R."/>
            <person name="Harris A."/>
            <person name="Strong C.M."/>
            <person name="Hou S."/>
            <person name="Tomlinson C."/>
            <person name="Dauphin-Kohlberg S."/>
            <person name="Kozlowicz-Reilly A."/>
            <person name="Leonard S."/>
            <person name="Rohlfing T."/>
            <person name="Rock S.M."/>
            <person name="Tin-Wollam A.-M."/>
            <person name="Abbott A."/>
            <person name="Minx P."/>
            <person name="Maupin R."/>
            <person name="Strowmatt C."/>
            <person name="Latreille P."/>
            <person name="Miller N."/>
            <person name="Johnson D."/>
            <person name="Murray J."/>
            <person name="Woessner J.P."/>
            <person name="Wendl M.C."/>
            <person name="Yang S.-P."/>
            <person name="Schultz B.R."/>
            <person name="Wallis J.W."/>
            <person name="Spieth J."/>
            <person name="Bieri T.A."/>
            <person name="Nelson J.O."/>
            <person name="Berkowicz N."/>
            <person name="Wohldmann P.E."/>
            <person name="Cook L.L."/>
            <person name="Hickenbotham M.T."/>
            <person name="Eldred J."/>
            <person name="Williams D."/>
            <person name="Bedell J.A."/>
            <person name="Mardis E.R."/>
            <person name="Clifton S.W."/>
            <person name="Chissoe S.L."/>
            <person name="Marra M.A."/>
            <person name="Raymond C."/>
            <person name="Haugen E."/>
            <person name="Gillett W."/>
            <person name="Zhou Y."/>
            <person name="James R."/>
            <person name="Phelps K."/>
            <person name="Iadanoto S."/>
            <person name="Bubb K."/>
            <person name="Simms E."/>
            <person name="Levy R."/>
            <person name="Clendenning J."/>
            <person name="Kaul R."/>
            <person name="Kent W.J."/>
            <person name="Furey T.S."/>
            <person name="Baertsch R.A."/>
            <person name="Brent M.R."/>
            <person name="Keibler E."/>
            <person name="Flicek P."/>
            <person name="Bork P."/>
            <person name="Suyama M."/>
            <person name="Bailey J.A."/>
            <person name="Portnoy M.E."/>
            <person name="Torrents D."/>
            <person name="Chinwalla A.T."/>
            <person name="Gish W.R."/>
            <person name="Eddy S.R."/>
            <person name="McPherson J.D."/>
            <person name="Olson M.V."/>
            <person name="Eichler E.E."/>
            <person name="Green E.D."/>
            <person name="Waterston R.H."/>
            <person name="Wilson R.K."/>
        </authorList>
    </citation>
    <scope>NUCLEOTIDE SEQUENCE [LARGE SCALE GENOMIC DNA]</scope>
</reference>
<reference key="3">
    <citation type="journal article" date="2003" name="Science">
        <title>Human chromosome 7: DNA sequence and biology.</title>
        <authorList>
            <person name="Scherer S.W."/>
            <person name="Cheung J."/>
            <person name="MacDonald J.R."/>
            <person name="Osborne L.R."/>
            <person name="Nakabayashi K."/>
            <person name="Herbrick J.-A."/>
            <person name="Carson A.R."/>
            <person name="Parker-Katiraee L."/>
            <person name="Skaug J."/>
            <person name="Khaja R."/>
            <person name="Zhang J."/>
            <person name="Hudek A.K."/>
            <person name="Li M."/>
            <person name="Haddad M."/>
            <person name="Duggan G.E."/>
            <person name="Fernandez B.A."/>
            <person name="Kanematsu E."/>
            <person name="Gentles S."/>
            <person name="Christopoulos C.C."/>
            <person name="Choufani S."/>
            <person name="Kwasnicka D."/>
            <person name="Zheng X.H."/>
            <person name="Lai Z."/>
            <person name="Nusskern D.R."/>
            <person name="Zhang Q."/>
            <person name="Gu Z."/>
            <person name="Lu F."/>
            <person name="Zeesman S."/>
            <person name="Nowaczyk M.J."/>
            <person name="Teshima I."/>
            <person name="Chitayat D."/>
            <person name="Shuman C."/>
            <person name="Weksberg R."/>
            <person name="Zackai E.H."/>
            <person name="Grebe T.A."/>
            <person name="Cox S.R."/>
            <person name="Kirkpatrick S.J."/>
            <person name="Rahman N."/>
            <person name="Friedman J.M."/>
            <person name="Heng H.H.Q."/>
            <person name="Pelicci P.G."/>
            <person name="Lo-Coco F."/>
            <person name="Belloni E."/>
            <person name="Shaffer L.G."/>
            <person name="Pober B."/>
            <person name="Morton C.C."/>
            <person name="Gusella J.F."/>
            <person name="Bruns G.A.P."/>
            <person name="Korf B.R."/>
            <person name="Quade B.J."/>
            <person name="Ligon A.H."/>
            <person name="Ferguson H."/>
            <person name="Higgins A.W."/>
            <person name="Leach N.T."/>
            <person name="Herrick S.R."/>
            <person name="Lemyre E."/>
            <person name="Farra C.G."/>
            <person name="Kim H.-G."/>
            <person name="Summers A.M."/>
            <person name="Gripp K.W."/>
            <person name="Roberts W."/>
            <person name="Szatmari P."/>
            <person name="Winsor E.J.T."/>
            <person name="Grzeschik K.-H."/>
            <person name="Teebi A."/>
            <person name="Minassian B.A."/>
            <person name="Kere J."/>
            <person name="Armengol L."/>
            <person name="Pujana M.A."/>
            <person name="Estivill X."/>
            <person name="Wilson M.D."/>
            <person name="Koop B.F."/>
            <person name="Tosi S."/>
            <person name="Moore G.E."/>
            <person name="Boright A.P."/>
            <person name="Zlotorynski E."/>
            <person name="Kerem B."/>
            <person name="Kroisel P.M."/>
            <person name="Petek E."/>
            <person name="Oscier D.G."/>
            <person name="Mould S.J."/>
            <person name="Doehner H."/>
            <person name="Doehner K."/>
            <person name="Rommens J.M."/>
            <person name="Vincent J.B."/>
            <person name="Venter J.C."/>
            <person name="Li P.W."/>
            <person name="Mural R.J."/>
            <person name="Adams M.D."/>
            <person name="Tsui L.-C."/>
        </authorList>
    </citation>
    <scope>NUCLEOTIDE SEQUENCE [LARGE SCALE GENOMIC DNA]</scope>
</reference>
<reference key="4">
    <citation type="submission" date="2005-09" db="EMBL/GenBank/DDBJ databases">
        <authorList>
            <person name="Mural R.J."/>
            <person name="Istrail S."/>
            <person name="Sutton G.G."/>
            <person name="Florea L."/>
            <person name="Halpern A.L."/>
            <person name="Mobarry C.M."/>
            <person name="Lippert R."/>
            <person name="Walenz B."/>
            <person name="Shatkay H."/>
            <person name="Dew I."/>
            <person name="Miller J.R."/>
            <person name="Flanigan M.J."/>
            <person name="Edwards N.J."/>
            <person name="Bolanos R."/>
            <person name="Fasulo D."/>
            <person name="Halldorsson B.V."/>
            <person name="Hannenhalli S."/>
            <person name="Turner R."/>
            <person name="Yooseph S."/>
            <person name="Lu F."/>
            <person name="Nusskern D.R."/>
            <person name="Shue B.C."/>
            <person name="Zheng X.H."/>
            <person name="Zhong F."/>
            <person name="Delcher A.L."/>
            <person name="Huson D.H."/>
            <person name="Kravitz S.A."/>
            <person name="Mouchard L."/>
            <person name="Reinert K."/>
            <person name="Remington K.A."/>
            <person name="Clark A.G."/>
            <person name="Waterman M.S."/>
            <person name="Eichler E.E."/>
            <person name="Adams M.D."/>
            <person name="Hunkapiller M.W."/>
            <person name="Myers E.W."/>
            <person name="Venter J.C."/>
        </authorList>
    </citation>
    <scope>NUCLEOTIDE SEQUENCE [LARGE SCALE GENOMIC DNA]</scope>
</reference>
<reference key="5">
    <citation type="journal article" date="2004" name="Genome Res.">
        <title>The status, quality, and expansion of the NIH full-length cDNA project: the Mammalian Gene Collection (MGC).</title>
        <authorList>
            <consortium name="The MGC Project Team"/>
        </authorList>
    </citation>
    <scope>NUCLEOTIDE SEQUENCE [LARGE SCALE MRNA] OF 225-1029 (ISOFORM 1)</scope>
    <source>
        <tissue>Brain</tissue>
    </source>
</reference>
<reference key="6">
    <citation type="journal article" date="2007" name="Gene Expr. Patterns">
        <title>Expression of estrogen induced gene 121-like (EIG121L) during early Xenopus development.</title>
        <authorList>
            <person name="Araki T."/>
            <person name="Kusakabe M."/>
            <person name="Nishida E."/>
        </authorList>
    </citation>
    <scope>IDENTIFICATION</scope>
</reference>
<reference key="7">
    <citation type="journal article" date="2013" name="J. Proteome Res.">
        <title>Toward a comprehensive characterization of a human cancer cell phosphoproteome.</title>
        <authorList>
            <person name="Zhou H."/>
            <person name="Di Palma S."/>
            <person name="Preisinger C."/>
            <person name="Peng M."/>
            <person name="Polat A.N."/>
            <person name="Heck A.J."/>
            <person name="Mohammed S."/>
        </authorList>
    </citation>
    <scope>PHOSPHORYLATION [LARGE SCALE ANALYSIS] AT SER-1018</scope>
    <scope>IDENTIFICATION BY MASS SPECTROMETRY [LARGE SCALE ANALYSIS]</scope>
    <source>
        <tissue>Erythroleukemia</tissue>
    </source>
</reference>
<accession>A8MWY0</accession>
<accession>A4D1C9</accession>
<accession>B4DJV3</accession>
<accession>Q17RI6</accession>
<accession>Q96DP2</accession>
<sequence>MLFRARGPVRGRGWGRPAEAPRRGRSPPWSPAWICCWALAGCQAAWAGDLPSSSSRPLPPCQEKDYHFEYTECDSSGSRWRVAIPNSAVDCSGLPDPVRGKECTFSCASGEYLEMKNQVCSKCGEGTYSLGSGIKFDEWDELPAGFSNIATFMDTVVGPSDSRPDGCNNSSWIPRGNYIESNRDDCTVSLIYAVHLKKSGYVFFEYQYVDNNIFFEFFIQNDQCQEMDTTTDKWVKLTDNGEWGSHSVMLKSGTNILYWRTTGILMGSKAVKPVLVKNITIEGVAYTSECFPCKPGTFSNKPGSFNCQVCPRNTYSEKGAKECIRCKDDSQFSEEGSSECTERPPCTTKDYFQIHTPCDEEGKTQIMYKWIEPKICREDLTDAIRLPPSGEKKDCPPCNPGFYNNGSSSCHPCPPGTFSDGTKECRPCPAGTEPALGFEYKWWNVLPGNMKTSCFNVGNSKCDGMNGWEVAGDHIQSGAGGSDNDYLILNLHIPGFKPPTSMTGATGSELGRITFVFETLCSADCVLYFMVDINRKSTNVVESWGGTKEKQAYTHIIFKNATFTFTWAFQRTNQGQDNRRFINDMVKIYSITATNAVDGVASSCRACALGSEQSGSSCVPCPPGHYIEKETNQCKECPPDTYLSIHQVYGKEACIPCGPGSKNNQDHSVCYSDCFFYHEKENQSLHYDFSNLSSVGSLMNGPSFTSKGTKYFHFFNISLCGHEGKKMALCTNNITDFTVKEIVAGSDDYTNLVGAFVCQSTIIPSESKGFRAALSSQSIILADTFIGVTVETTLKNINIKEDMFPVPTSQIPDVHFFYKSSTATTSCINGRSTAVKMRCNPTKSGAGVISVPSKCPAGTCDGCTFYFLWESAEACPLCTEHDFHEIEGACKRGFQETLYVWNEPKWCIKGISLPEKKLATCETVDFWLKVGAGVGAFTAVLLVALTCYFWKKNQKLEYKYSKLVMTTNSKECELPAADSCAIMEGEDNEEEVVYSNKQSLLGKLKSLATKEKEDHFESVQLKTSRSPNI</sequence>
<proteinExistence type="evidence at protein level"/>
<keyword id="KW-0025">Alternative splicing</keyword>
<keyword id="KW-1003">Cell membrane</keyword>
<keyword id="KW-1015">Disulfide bond</keyword>
<keyword id="KW-0325">Glycoprotein</keyword>
<keyword id="KW-0472">Membrane</keyword>
<keyword id="KW-0597">Phosphoprotein</keyword>
<keyword id="KW-1267">Proteomics identification</keyword>
<keyword id="KW-1185">Reference proteome</keyword>
<keyword id="KW-0732">Signal</keyword>
<keyword id="KW-0812">Transmembrane</keyword>
<keyword id="KW-1133">Transmembrane helix</keyword>
<evidence type="ECO:0000250" key="1"/>
<evidence type="ECO:0000250" key="2">
    <source>
        <dbReference type="UniProtKB" id="Q3UZV7"/>
    </source>
</evidence>
<evidence type="ECO:0000250" key="3">
    <source>
        <dbReference type="UniProtKB" id="Q6DDW2"/>
    </source>
</evidence>
<evidence type="ECO:0000255" key="4"/>
<evidence type="ECO:0000255" key="5">
    <source>
        <dbReference type="PROSITE-ProRule" id="PRU01262"/>
    </source>
</evidence>
<evidence type="ECO:0000303" key="6">
    <source>
    </source>
</evidence>
<evidence type="ECO:0000303" key="7">
    <source>
    </source>
</evidence>
<evidence type="ECO:0000305" key="8"/>
<evidence type="ECO:0000312" key="9">
    <source>
        <dbReference type="HGNC" id="HGNC:21945"/>
    </source>
</evidence>
<evidence type="ECO:0007744" key="10">
    <source>
    </source>
</evidence>
<gene>
    <name evidence="9" type="primary">ELAPOR2</name>
    <name evidence="7" type="synonym">EIG121L</name>
    <name evidence="9" type="synonym">KIAA1324L</name>
</gene>
<feature type="signal peptide" evidence="4">
    <location>
        <begin position="1"/>
        <end position="47"/>
    </location>
</feature>
<feature type="chain" id="PRO_0000333798" description="Endosome/lysosome-associated apoptosis and autophagy regulator family member 2">
    <location>
        <begin position="48"/>
        <end position="1029"/>
    </location>
</feature>
<feature type="topological domain" description="Extracellular" evidence="4">
    <location>
        <begin position="48"/>
        <end position="929"/>
    </location>
</feature>
<feature type="transmembrane region" description="Helical" evidence="4">
    <location>
        <begin position="930"/>
        <end position="950"/>
    </location>
</feature>
<feature type="topological domain" description="Cytoplasmic" evidence="4">
    <location>
        <begin position="951"/>
        <end position="1029"/>
    </location>
</feature>
<feature type="domain" description="MRH" evidence="5">
    <location>
        <begin position="672"/>
        <end position="877"/>
    </location>
</feature>
<feature type="modified residue" description="Phosphoserine" evidence="10">
    <location>
        <position position="1018"/>
    </location>
</feature>
<feature type="glycosylation site" description="N-linked (GlcNAc...) asparagine" evidence="4">
    <location>
        <position position="169"/>
    </location>
</feature>
<feature type="glycosylation site" description="N-linked (GlcNAc...) asparagine" evidence="4">
    <location>
        <position position="405"/>
    </location>
</feature>
<feature type="glycosylation site" description="N-linked (GlcNAc...) asparagine" evidence="4">
    <location>
        <position position="691"/>
    </location>
</feature>
<feature type="disulfide bond" evidence="1">
    <location>
        <begin position="293"/>
        <end position="310"/>
    </location>
</feature>
<feature type="disulfide bond" evidence="1">
    <location>
        <begin position="323"/>
        <end position="346"/>
    </location>
</feature>
<feature type="disulfide bond" evidence="1">
    <location>
        <begin position="326"/>
        <end position="358"/>
    </location>
</feature>
<feature type="disulfide bond" evidence="5">
    <location>
        <begin position="674"/>
        <end position="720"/>
    </location>
</feature>
<feature type="disulfide bond" evidence="5">
    <location>
        <begin position="730"/>
        <end position="758"/>
    </location>
</feature>
<feature type="disulfide bond" evidence="5">
    <location>
        <begin position="827"/>
        <end position="863"/>
    </location>
</feature>
<feature type="disulfide bond" evidence="5">
    <location>
        <begin position="839"/>
        <end position="875"/>
    </location>
</feature>
<feature type="splice variant" id="VSP_033529" description="In isoform 2." evidence="6">
    <location>
        <begin position="1"/>
        <end position="240"/>
    </location>
</feature>
<feature type="splice variant" id="VSP_043254" description="In isoform 3." evidence="6">
    <location>
        <begin position="1"/>
        <end position="167"/>
    </location>
</feature>
<feature type="splice variant" id="VSP_043255" description="In isoform 3." evidence="6">
    <original>NN</original>
    <variation>MH</variation>
    <location>
        <begin position="168"/>
        <end position="169"/>
    </location>
</feature>
<feature type="splice variant" id="VSP_033530" description="In isoform 2." evidence="6">
    <original>GEWGSHS</original>
    <variation>MLEGNYQ</variation>
    <location>
        <begin position="241"/>
        <end position="247"/>
    </location>
</feature>
<feature type="sequence variant" id="VAR_043161" description="In dbSNP:rs1029366.">
    <original>N</original>
    <variation>Y</variation>
    <location>
        <position position="539"/>
    </location>
</feature>
<feature type="sequence variant" id="VAR_043162" description="In dbSNP:rs34412146.">
    <original>L</original>
    <variation>V</variation>
    <location>
        <position position="729"/>
    </location>
</feature>
<feature type="sequence variant" id="VAR_043163" description="In dbSNP:rs34577440.">
    <original>S</original>
    <variation>R</variation>
    <location>
        <position position="767"/>
    </location>
</feature>
<feature type="sequence conflict" description="In Ref. 1; BAB71041." evidence="8" ref="1">
    <original>H</original>
    <variation>P</variation>
    <location>
        <position position="678"/>
    </location>
</feature>